<organism>
    <name type="scientific">Burkholderia ambifaria (strain ATCC BAA-244 / DSM 16087 / CCUG 44356 / LMG 19182 / AMMD)</name>
    <name type="common">Burkholderia cepacia (strain AMMD)</name>
    <dbReference type="NCBI Taxonomy" id="339670"/>
    <lineage>
        <taxon>Bacteria</taxon>
        <taxon>Pseudomonadati</taxon>
        <taxon>Pseudomonadota</taxon>
        <taxon>Betaproteobacteria</taxon>
        <taxon>Burkholderiales</taxon>
        <taxon>Burkholderiaceae</taxon>
        <taxon>Burkholderia</taxon>
        <taxon>Burkholderia cepacia complex</taxon>
    </lineage>
</organism>
<dbReference type="EC" id="2.3.1.234" evidence="1"/>
<dbReference type="EMBL" id="CP000441">
    <property type="protein sequence ID" value="ABI88807.1"/>
    <property type="molecule type" value="Genomic_DNA"/>
</dbReference>
<dbReference type="RefSeq" id="WP_011658297.1">
    <property type="nucleotide sequence ID" value="NC_008391.1"/>
</dbReference>
<dbReference type="SMR" id="Q0BAL6"/>
<dbReference type="GeneID" id="93086264"/>
<dbReference type="KEGG" id="bam:Bamb_3252"/>
<dbReference type="PATRIC" id="fig|339670.21.peg.3457"/>
<dbReference type="eggNOG" id="COG0533">
    <property type="taxonomic scope" value="Bacteria"/>
</dbReference>
<dbReference type="Proteomes" id="UP000000662">
    <property type="component" value="Chromosome 2"/>
</dbReference>
<dbReference type="GO" id="GO:0005737">
    <property type="term" value="C:cytoplasm"/>
    <property type="evidence" value="ECO:0007669"/>
    <property type="project" value="UniProtKB-SubCell"/>
</dbReference>
<dbReference type="GO" id="GO:0005506">
    <property type="term" value="F:iron ion binding"/>
    <property type="evidence" value="ECO:0007669"/>
    <property type="project" value="UniProtKB-UniRule"/>
</dbReference>
<dbReference type="GO" id="GO:0061711">
    <property type="term" value="F:N(6)-L-threonylcarbamoyladenine synthase activity"/>
    <property type="evidence" value="ECO:0007669"/>
    <property type="project" value="UniProtKB-EC"/>
</dbReference>
<dbReference type="GO" id="GO:0002949">
    <property type="term" value="P:tRNA threonylcarbamoyladenosine modification"/>
    <property type="evidence" value="ECO:0007669"/>
    <property type="project" value="UniProtKB-UniRule"/>
</dbReference>
<dbReference type="CDD" id="cd24133">
    <property type="entry name" value="ASKHA_NBD_TsaD_bac"/>
    <property type="match status" value="1"/>
</dbReference>
<dbReference type="FunFam" id="3.30.420.40:FF:000012">
    <property type="entry name" value="tRNA N6-adenosine threonylcarbamoyltransferase"/>
    <property type="match status" value="1"/>
</dbReference>
<dbReference type="FunFam" id="3.30.420.40:FF:000040">
    <property type="entry name" value="tRNA N6-adenosine threonylcarbamoyltransferase"/>
    <property type="match status" value="1"/>
</dbReference>
<dbReference type="Gene3D" id="3.30.420.40">
    <property type="match status" value="2"/>
</dbReference>
<dbReference type="HAMAP" id="MF_01445">
    <property type="entry name" value="TsaD"/>
    <property type="match status" value="1"/>
</dbReference>
<dbReference type="InterPro" id="IPR043129">
    <property type="entry name" value="ATPase_NBD"/>
</dbReference>
<dbReference type="InterPro" id="IPR000905">
    <property type="entry name" value="Gcp-like_dom"/>
</dbReference>
<dbReference type="InterPro" id="IPR017861">
    <property type="entry name" value="KAE1/TsaD"/>
</dbReference>
<dbReference type="InterPro" id="IPR022450">
    <property type="entry name" value="TsaD"/>
</dbReference>
<dbReference type="NCBIfam" id="TIGR00329">
    <property type="entry name" value="gcp_kae1"/>
    <property type="match status" value="1"/>
</dbReference>
<dbReference type="NCBIfam" id="TIGR03723">
    <property type="entry name" value="T6A_TsaD_YgjD"/>
    <property type="match status" value="1"/>
</dbReference>
<dbReference type="PANTHER" id="PTHR11735">
    <property type="entry name" value="TRNA N6-ADENOSINE THREONYLCARBAMOYLTRANSFERASE"/>
    <property type="match status" value="1"/>
</dbReference>
<dbReference type="PANTHER" id="PTHR11735:SF6">
    <property type="entry name" value="TRNA N6-ADENOSINE THREONYLCARBAMOYLTRANSFERASE, MITOCHONDRIAL"/>
    <property type="match status" value="1"/>
</dbReference>
<dbReference type="Pfam" id="PF00814">
    <property type="entry name" value="TsaD"/>
    <property type="match status" value="1"/>
</dbReference>
<dbReference type="PRINTS" id="PR00789">
    <property type="entry name" value="OSIALOPTASE"/>
</dbReference>
<dbReference type="SUPFAM" id="SSF53067">
    <property type="entry name" value="Actin-like ATPase domain"/>
    <property type="match status" value="2"/>
</dbReference>
<gene>
    <name evidence="1" type="primary">tsaD</name>
    <name type="synonym">gcp</name>
    <name type="ordered locus">Bamb_3252</name>
</gene>
<evidence type="ECO:0000255" key="1">
    <source>
        <dbReference type="HAMAP-Rule" id="MF_01445"/>
    </source>
</evidence>
<keyword id="KW-0012">Acyltransferase</keyword>
<keyword id="KW-0963">Cytoplasm</keyword>
<keyword id="KW-0408">Iron</keyword>
<keyword id="KW-0479">Metal-binding</keyword>
<keyword id="KW-0808">Transferase</keyword>
<keyword id="KW-0819">tRNA processing</keyword>
<feature type="chain" id="PRO_0000303301" description="tRNA N6-adenosine threonylcarbamoyltransferase">
    <location>
        <begin position="1"/>
        <end position="346"/>
    </location>
</feature>
<feature type="binding site" evidence="1">
    <location>
        <position position="111"/>
    </location>
    <ligand>
        <name>Fe cation</name>
        <dbReference type="ChEBI" id="CHEBI:24875"/>
    </ligand>
</feature>
<feature type="binding site" evidence="1">
    <location>
        <position position="115"/>
    </location>
    <ligand>
        <name>Fe cation</name>
        <dbReference type="ChEBI" id="CHEBI:24875"/>
    </ligand>
</feature>
<feature type="binding site" evidence="1">
    <location>
        <begin position="134"/>
        <end position="138"/>
    </location>
    <ligand>
        <name>substrate</name>
    </ligand>
</feature>
<feature type="binding site" evidence="1">
    <location>
        <position position="167"/>
    </location>
    <ligand>
        <name>substrate</name>
    </ligand>
</feature>
<feature type="binding site" evidence="1">
    <location>
        <position position="180"/>
    </location>
    <ligand>
        <name>substrate</name>
    </ligand>
</feature>
<feature type="binding site" evidence="1">
    <location>
        <position position="279"/>
    </location>
    <ligand>
        <name>substrate</name>
    </ligand>
</feature>
<feature type="binding site" evidence="1">
    <location>
        <position position="307"/>
    </location>
    <ligand>
        <name>Fe cation</name>
        <dbReference type="ChEBI" id="CHEBI:24875"/>
    </ligand>
</feature>
<sequence length="346" mass="36510">MLVLGIESSCDETGLALYDTQRGLLAHALHSQIAMHREYGGVVPELASRDHIRRALPLLEEVMAQSGTHRDDIDAIAFTQGPGLAGALLVGASIANALALAWNKPTVGIHHLEGHLLSPLLVDEPPPFPFIALLVSGGHTQLMRVTDVGVYETLGETLDDAAGEAFDKTAKLIGLGYPGGPEVSKLAETGTPGAVVLPRPMLHSGDLDFSFSGLKTAVLTQMKKFEAAKLDGEALERAKADLARGFVDAAVDVLVAKSLAALKQTKLKRLVVAGGVGANRQLRAALSAAAAKRGFDVHYPDLALCTDNGAMIALAGALRLGRWPEQANADYAFTVKPRWDLASLAR</sequence>
<reference key="1">
    <citation type="submission" date="2006-08" db="EMBL/GenBank/DDBJ databases">
        <title>Complete sequence of chromosome 2 of Burkholderia cepacia AMMD.</title>
        <authorList>
            <person name="Copeland A."/>
            <person name="Lucas S."/>
            <person name="Lapidus A."/>
            <person name="Barry K."/>
            <person name="Detter J.C."/>
            <person name="Glavina del Rio T."/>
            <person name="Hammon N."/>
            <person name="Israni S."/>
            <person name="Pitluck S."/>
            <person name="Bruce D."/>
            <person name="Chain P."/>
            <person name="Malfatti S."/>
            <person name="Shin M."/>
            <person name="Vergez L."/>
            <person name="Schmutz J."/>
            <person name="Larimer F."/>
            <person name="Land M."/>
            <person name="Hauser L."/>
            <person name="Kyrpides N."/>
            <person name="Kim E."/>
            <person name="Parke J."/>
            <person name="Coenye T."/>
            <person name="Konstantinidis K."/>
            <person name="Ramette A."/>
            <person name="Tiedje J."/>
            <person name="Richardson P."/>
        </authorList>
    </citation>
    <scope>NUCLEOTIDE SEQUENCE [LARGE SCALE GENOMIC DNA]</scope>
    <source>
        <strain>ATCC BAA-244 / DSM 16087 / CCUG 44356 / LMG 19182 / AMMD</strain>
    </source>
</reference>
<comment type="function">
    <text evidence="1">Required for the formation of a threonylcarbamoyl group on adenosine at position 37 (t(6)A37) in tRNAs that read codons beginning with adenine. Is involved in the transfer of the threonylcarbamoyl moiety of threonylcarbamoyl-AMP (TC-AMP) to the N6 group of A37, together with TsaE and TsaB. TsaD likely plays a direct catalytic role in this reaction.</text>
</comment>
<comment type="catalytic activity">
    <reaction evidence="1">
        <text>L-threonylcarbamoyladenylate + adenosine(37) in tRNA = N(6)-L-threonylcarbamoyladenosine(37) in tRNA + AMP + H(+)</text>
        <dbReference type="Rhea" id="RHEA:37059"/>
        <dbReference type="Rhea" id="RHEA-COMP:10162"/>
        <dbReference type="Rhea" id="RHEA-COMP:10163"/>
        <dbReference type="ChEBI" id="CHEBI:15378"/>
        <dbReference type="ChEBI" id="CHEBI:73682"/>
        <dbReference type="ChEBI" id="CHEBI:74411"/>
        <dbReference type="ChEBI" id="CHEBI:74418"/>
        <dbReference type="ChEBI" id="CHEBI:456215"/>
        <dbReference type="EC" id="2.3.1.234"/>
    </reaction>
</comment>
<comment type="cofactor">
    <cofactor evidence="1">
        <name>Fe(2+)</name>
        <dbReference type="ChEBI" id="CHEBI:29033"/>
    </cofactor>
    <text evidence="1">Binds 1 Fe(2+) ion per subunit.</text>
</comment>
<comment type="subcellular location">
    <subcellularLocation>
        <location evidence="1">Cytoplasm</location>
    </subcellularLocation>
</comment>
<comment type="similarity">
    <text evidence="1">Belongs to the KAE1 / TsaD family.</text>
</comment>
<accession>Q0BAL6</accession>
<protein>
    <recommendedName>
        <fullName evidence="1">tRNA N6-adenosine threonylcarbamoyltransferase</fullName>
        <ecNumber evidence="1">2.3.1.234</ecNumber>
    </recommendedName>
    <alternativeName>
        <fullName evidence="1">N6-L-threonylcarbamoyladenine synthase</fullName>
        <shortName evidence="1">t(6)A synthase</shortName>
    </alternativeName>
    <alternativeName>
        <fullName evidence="1">t(6)A37 threonylcarbamoyladenosine biosynthesis protein TsaD</fullName>
    </alternativeName>
    <alternativeName>
        <fullName evidence="1">tRNA threonylcarbamoyladenosine biosynthesis protein TsaD</fullName>
    </alternativeName>
</protein>
<proteinExistence type="inferred from homology"/>
<name>TSAD_BURCM</name>